<evidence type="ECO:0000255" key="1">
    <source>
        <dbReference type="HAMAP-Rule" id="MF_00202"/>
    </source>
</evidence>
<feature type="chain" id="PRO_0000205256" description="Isopentenyl-diphosphate Delta-isomerase">
    <location>
        <begin position="1"/>
        <end position="180"/>
    </location>
</feature>
<feature type="domain" description="Nudix hydrolase">
    <location>
        <begin position="30"/>
        <end position="168"/>
    </location>
</feature>
<feature type="active site" evidence="1">
    <location>
        <position position="70"/>
    </location>
</feature>
<feature type="active site" evidence="1">
    <location>
        <position position="119"/>
    </location>
</feature>
<feature type="binding site" evidence="1">
    <location>
        <position position="26"/>
    </location>
    <ligand>
        <name>Mn(2+)</name>
        <dbReference type="ChEBI" id="CHEBI:29035"/>
    </ligand>
</feature>
<feature type="binding site" evidence="1">
    <location>
        <position position="32"/>
    </location>
    <ligand>
        <name>Mn(2+)</name>
        <dbReference type="ChEBI" id="CHEBI:29035"/>
    </ligand>
</feature>
<feature type="binding site" evidence="1">
    <location>
        <position position="70"/>
    </location>
    <ligand>
        <name>Mg(2+)</name>
        <dbReference type="ChEBI" id="CHEBI:18420"/>
    </ligand>
</feature>
<feature type="binding site" evidence="1">
    <location>
        <position position="72"/>
    </location>
    <ligand>
        <name>Mn(2+)</name>
        <dbReference type="ChEBI" id="CHEBI:29035"/>
    </ligand>
</feature>
<feature type="binding site" evidence="1">
    <location>
        <position position="90"/>
    </location>
    <ligand>
        <name>Mg(2+)</name>
        <dbReference type="ChEBI" id="CHEBI:18420"/>
    </ligand>
</feature>
<feature type="binding site" evidence="1">
    <location>
        <position position="117"/>
    </location>
    <ligand>
        <name>Mn(2+)</name>
        <dbReference type="ChEBI" id="CHEBI:29035"/>
    </ligand>
</feature>
<feature type="binding site" evidence="1">
    <location>
        <position position="119"/>
    </location>
    <ligand>
        <name>Mn(2+)</name>
        <dbReference type="ChEBI" id="CHEBI:29035"/>
    </ligand>
</feature>
<proteinExistence type="inferred from homology"/>
<dbReference type="EC" id="5.3.3.2" evidence="1"/>
<dbReference type="EMBL" id="CR378664">
    <property type="protein sequence ID" value="CAG18900.1"/>
    <property type="molecule type" value="Genomic_DNA"/>
</dbReference>
<dbReference type="RefSeq" id="WP_011217256.1">
    <property type="nucleotide sequence ID" value="NC_006370.1"/>
</dbReference>
<dbReference type="SMR" id="Q6LUX5"/>
<dbReference type="STRING" id="298386.PBPRA0469"/>
<dbReference type="KEGG" id="ppr:PBPRA0469"/>
<dbReference type="eggNOG" id="COG1443">
    <property type="taxonomic scope" value="Bacteria"/>
</dbReference>
<dbReference type="HOGENOM" id="CLU_060552_2_1_6"/>
<dbReference type="UniPathway" id="UPA00059">
    <property type="reaction ID" value="UER00104"/>
</dbReference>
<dbReference type="Proteomes" id="UP000000593">
    <property type="component" value="Chromosome 1"/>
</dbReference>
<dbReference type="GO" id="GO:0005737">
    <property type="term" value="C:cytoplasm"/>
    <property type="evidence" value="ECO:0007669"/>
    <property type="project" value="UniProtKB-SubCell"/>
</dbReference>
<dbReference type="GO" id="GO:0004452">
    <property type="term" value="F:isopentenyl-diphosphate delta-isomerase activity"/>
    <property type="evidence" value="ECO:0007669"/>
    <property type="project" value="UniProtKB-UniRule"/>
</dbReference>
<dbReference type="GO" id="GO:0046872">
    <property type="term" value="F:metal ion binding"/>
    <property type="evidence" value="ECO:0007669"/>
    <property type="project" value="UniProtKB-KW"/>
</dbReference>
<dbReference type="GO" id="GO:0050992">
    <property type="term" value="P:dimethylallyl diphosphate biosynthetic process"/>
    <property type="evidence" value="ECO:0007669"/>
    <property type="project" value="UniProtKB-UniRule"/>
</dbReference>
<dbReference type="GO" id="GO:0009240">
    <property type="term" value="P:isopentenyl diphosphate biosynthetic process"/>
    <property type="evidence" value="ECO:0007669"/>
    <property type="project" value="TreeGrafter"/>
</dbReference>
<dbReference type="CDD" id="cd02885">
    <property type="entry name" value="NUDIX_IPP_Isomerase"/>
    <property type="match status" value="1"/>
</dbReference>
<dbReference type="Gene3D" id="3.90.79.10">
    <property type="entry name" value="Nucleoside Triphosphate Pyrophosphohydrolase"/>
    <property type="match status" value="1"/>
</dbReference>
<dbReference type="HAMAP" id="MF_00202">
    <property type="entry name" value="Idi"/>
    <property type="match status" value="1"/>
</dbReference>
<dbReference type="InterPro" id="IPR056375">
    <property type="entry name" value="Idi_bact"/>
</dbReference>
<dbReference type="InterPro" id="IPR011876">
    <property type="entry name" value="IsopentenylPP_isomerase_typ1"/>
</dbReference>
<dbReference type="InterPro" id="IPR015797">
    <property type="entry name" value="NUDIX_hydrolase-like_dom_sf"/>
</dbReference>
<dbReference type="InterPro" id="IPR000086">
    <property type="entry name" value="NUDIX_hydrolase_dom"/>
</dbReference>
<dbReference type="NCBIfam" id="TIGR02150">
    <property type="entry name" value="IPP_isom_1"/>
    <property type="match status" value="1"/>
</dbReference>
<dbReference type="NCBIfam" id="NF002995">
    <property type="entry name" value="PRK03759.1"/>
    <property type="match status" value="1"/>
</dbReference>
<dbReference type="PANTHER" id="PTHR10885">
    <property type="entry name" value="ISOPENTENYL-DIPHOSPHATE DELTA-ISOMERASE"/>
    <property type="match status" value="1"/>
</dbReference>
<dbReference type="PANTHER" id="PTHR10885:SF0">
    <property type="entry name" value="ISOPENTENYL-DIPHOSPHATE DELTA-ISOMERASE"/>
    <property type="match status" value="1"/>
</dbReference>
<dbReference type="Pfam" id="PF00293">
    <property type="entry name" value="NUDIX"/>
    <property type="match status" value="1"/>
</dbReference>
<dbReference type="PIRSF" id="PIRSF018427">
    <property type="entry name" value="Isopntndiph_ism"/>
    <property type="match status" value="1"/>
</dbReference>
<dbReference type="SUPFAM" id="SSF55811">
    <property type="entry name" value="Nudix"/>
    <property type="match status" value="1"/>
</dbReference>
<dbReference type="PROSITE" id="PS51462">
    <property type="entry name" value="NUDIX"/>
    <property type="match status" value="1"/>
</dbReference>
<keyword id="KW-0963">Cytoplasm</keyword>
<keyword id="KW-0413">Isomerase</keyword>
<keyword id="KW-0414">Isoprene biosynthesis</keyword>
<keyword id="KW-0460">Magnesium</keyword>
<keyword id="KW-0464">Manganese</keyword>
<keyword id="KW-0479">Metal-binding</keyword>
<keyword id="KW-1185">Reference proteome</keyword>
<organism>
    <name type="scientific">Photobacterium profundum (strain SS9)</name>
    <dbReference type="NCBI Taxonomy" id="298386"/>
    <lineage>
        <taxon>Bacteria</taxon>
        <taxon>Pseudomonadati</taxon>
        <taxon>Pseudomonadota</taxon>
        <taxon>Gammaproteobacteria</taxon>
        <taxon>Vibrionales</taxon>
        <taxon>Vibrionaceae</taxon>
        <taxon>Photobacterium</taxon>
    </lineage>
</organism>
<sequence>MIIEEQVVLVDQQGRALGLQEKMQAHRDGALHLAFSVLLYRETTQGIEFLMQQRALGKYHSGGLWTNTCCSHPRQGETLEQAGLRRLTEEMGIVGLESLDDIASFVYRAELDNQLIEHEWDHVLIANGTELAIIPNSEEVKSYRWWSKADLELGLADTPELFTAWFPQVLQYVINELSSQ</sequence>
<accession>Q6LUX5</accession>
<reference key="1">
    <citation type="journal article" date="2005" name="Science">
        <title>Life at depth: Photobacterium profundum genome sequence and expression analysis.</title>
        <authorList>
            <person name="Vezzi A."/>
            <person name="Campanaro S."/>
            <person name="D'Angelo M."/>
            <person name="Simonato F."/>
            <person name="Vitulo N."/>
            <person name="Lauro F.M."/>
            <person name="Cestaro A."/>
            <person name="Malacrida G."/>
            <person name="Simionati B."/>
            <person name="Cannata N."/>
            <person name="Romualdi C."/>
            <person name="Bartlett D.H."/>
            <person name="Valle G."/>
        </authorList>
    </citation>
    <scope>NUCLEOTIDE SEQUENCE [LARGE SCALE GENOMIC DNA]</scope>
    <source>
        <strain>ATCC BAA-1253 / SS9</strain>
    </source>
</reference>
<protein>
    <recommendedName>
        <fullName evidence="1">Isopentenyl-diphosphate Delta-isomerase</fullName>
        <shortName evidence="1">IPP isomerase</shortName>
        <ecNumber evidence="1">5.3.3.2</ecNumber>
    </recommendedName>
    <alternativeName>
        <fullName evidence="1">IPP:DMAPP isomerase</fullName>
    </alternativeName>
    <alternativeName>
        <fullName evidence="1">Isopentenyl pyrophosphate isomerase</fullName>
    </alternativeName>
</protein>
<gene>
    <name evidence="1" type="primary">idi</name>
    <name type="ordered locus">PBPRA0469</name>
</gene>
<comment type="function">
    <text evidence="1">Catalyzes the 1,3-allylic rearrangement of the homoallylic substrate isopentenyl (IPP) to its highly electrophilic allylic isomer, dimethylallyl diphosphate (DMAPP).</text>
</comment>
<comment type="catalytic activity">
    <reaction evidence="1">
        <text>isopentenyl diphosphate = dimethylallyl diphosphate</text>
        <dbReference type="Rhea" id="RHEA:23284"/>
        <dbReference type="ChEBI" id="CHEBI:57623"/>
        <dbReference type="ChEBI" id="CHEBI:128769"/>
        <dbReference type="EC" id="5.3.3.2"/>
    </reaction>
</comment>
<comment type="cofactor">
    <cofactor evidence="1">
        <name>Mg(2+)</name>
        <dbReference type="ChEBI" id="CHEBI:18420"/>
    </cofactor>
    <text evidence="1">Binds 1 Mg(2+) ion per subunit. The magnesium ion binds only when substrate is bound.</text>
</comment>
<comment type="cofactor">
    <cofactor evidence="1">
        <name>Mn(2+)</name>
        <dbReference type="ChEBI" id="CHEBI:29035"/>
    </cofactor>
    <text evidence="1">Binds 1 Mn(2+) ion per subunit.</text>
</comment>
<comment type="pathway">
    <text evidence="1">Isoprenoid biosynthesis; dimethylallyl diphosphate biosynthesis; dimethylallyl diphosphate from isopentenyl diphosphate: step 1/1.</text>
</comment>
<comment type="subcellular location">
    <subcellularLocation>
        <location evidence="1">Cytoplasm</location>
    </subcellularLocation>
</comment>
<comment type="similarity">
    <text evidence="1">Belongs to the IPP isomerase type 1 family.</text>
</comment>
<name>IDI_PHOPR</name>